<accession>Q57N15</accession>
<evidence type="ECO:0000255" key="1">
    <source>
        <dbReference type="HAMAP-Rule" id="MF_00617"/>
    </source>
</evidence>
<keyword id="KW-0963">Cytoplasm</keyword>
<keyword id="KW-0378">Hydrolase</keyword>
<keyword id="KW-0460">Magnesium</keyword>
<keyword id="KW-0479">Metal-binding</keyword>
<protein>
    <recommendedName>
        <fullName evidence="1">Mannosyl-3-phosphoglycerate phosphatase</fullName>
        <shortName evidence="1">MPGP</shortName>
        <ecNumber evidence="1">3.1.3.70</ecNumber>
    </recommendedName>
</protein>
<name>MPGP_SALCH</name>
<gene>
    <name type="primary">yedP</name>
    <name type="ordered locus">SCH_1990</name>
</gene>
<sequence length="271" mass="30925">MLSIHDPLLIFTDLDGTLLNSHTFEWQPAAPWLTRLHESGVPVILCSSKTAAEMLQLQTTLNLQGLPLIAENGAVIQLDVHWEDHPNYPRLIAGISHNEIRLVLHKLREKEQFKFTTFDDVDDQVISEWTGLNRAQSALTRLHEASVSLIWRDSDERMAQFVARLNDLGLQFVHGARFWHVLDASAGKDQAANWLIEAYRRQWRARPLTLGLGDGPNDAPLLDVMDYAVVVKGLNREGVHLRNDDPQRVYRSQNEGPDGWREGMDYFFSRS</sequence>
<feature type="chain" id="PRO_0000273959" description="Mannosyl-3-phosphoglycerate phosphatase">
    <location>
        <begin position="1"/>
        <end position="271"/>
    </location>
</feature>
<feature type="active site" description="Nucleophile" evidence="1">
    <location>
        <position position="13"/>
    </location>
</feature>
<feature type="binding site" evidence="1">
    <location>
        <position position="13"/>
    </location>
    <ligand>
        <name>Mg(2+)</name>
        <dbReference type="ChEBI" id="CHEBI:18420"/>
    </ligand>
</feature>
<feature type="binding site" evidence="1">
    <location>
        <position position="15"/>
    </location>
    <ligand>
        <name>Mg(2+)</name>
        <dbReference type="ChEBI" id="CHEBI:18420"/>
    </ligand>
</feature>
<feature type="binding site" evidence="1">
    <location>
        <position position="214"/>
    </location>
    <ligand>
        <name>Mg(2+)</name>
        <dbReference type="ChEBI" id="CHEBI:18420"/>
    </ligand>
</feature>
<proteinExistence type="inferred from homology"/>
<dbReference type="EC" id="3.1.3.70" evidence="1"/>
<dbReference type="EMBL" id="AE017220">
    <property type="protein sequence ID" value="AAX65896.1"/>
    <property type="molecule type" value="Genomic_DNA"/>
</dbReference>
<dbReference type="RefSeq" id="WP_000948794.1">
    <property type="nucleotide sequence ID" value="NC_006905.1"/>
</dbReference>
<dbReference type="SMR" id="Q57N15"/>
<dbReference type="KEGG" id="sec:SCH_1990"/>
<dbReference type="HOGENOM" id="CLU_063016_0_0_6"/>
<dbReference type="Proteomes" id="UP000000538">
    <property type="component" value="Chromosome"/>
</dbReference>
<dbReference type="GO" id="GO:0005829">
    <property type="term" value="C:cytosol"/>
    <property type="evidence" value="ECO:0007669"/>
    <property type="project" value="TreeGrafter"/>
</dbReference>
<dbReference type="GO" id="GO:0000287">
    <property type="term" value="F:magnesium ion binding"/>
    <property type="evidence" value="ECO:0007669"/>
    <property type="project" value="TreeGrafter"/>
</dbReference>
<dbReference type="GO" id="GO:0050531">
    <property type="term" value="F:mannosyl-3-phosphoglycerate phosphatase activity"/>
    <property type="evidence" value="ECO:0007669"/>
    <property type="project" value="UniProtKB-UniRule"/>
</dbReference>
<dbReference type="GO" id="GO:0051479">
    <property type="term" value="P:mannosylglycerate biosynthetic process"/>
    <property type="evidence" value="ECO:0007669"/>
    <property type="project" value="InterPro"/>
</dbReference>
<dbReference type="CDD" id="cd07507">
    <property type="entry name" value="HAD_Pase"/>
    <property type="match status" value="1"/>
</dbReference>
<dbReference type="Gene3D" id="3.40.50.1000">
    <property type="entry name" value="HAD superfamily/HAD-like"/>
    <property type="match status" value="1"/>
</dbReference>
<dbReference type="Gene3D" id="3.30.980.20">
    <property type="entry name" value="Putative mannosyl-3-phosphoglycerate phosphatase, domain 2"/>
    <property type="match status" value="1"/>
</dbReference>
<dbReference type="HAMAP" id="MF_00617">
    <property type="entry name" value="MPGP_rel"/>
    <property type="match status" value="1"/>
</dbReference>
<dbReference type="InterPro" id="IPR036412">
    <property type="entry name" value="HAD-like_sf"/>
</dbReference>
<dbReference type="InterPro" id="IPR006381">
    <property type="entry name" value="HAD-SF-IIB-MPGP"/>
</dbReference>
<dbReference type="InterPro" id="IPR006379">
    <property type="entry name" value="HAD-SF_hydro_IIB"/>
</dbReference>
<dbReference type="InterPro" id="IPR023214">
    <property type="entry name" value="HAD_sf"/>
</dbReference>
<dbReference type="InterPro" id="IPR012815">
    <property type="entry name" value="MPG_Pase"/>
</dbReference>
<dbReference type="NCBIfam" id="TIGR01484">
    <property type="entry name" value="HAD-SF-IIB"/>
    <property type="match status" value="1"/>
</dbReference>
<dbReference type="NCBIfam" id="TIGR01486">
    <property type="entry name" value="HAD-SF-IIB-MPGP"/>
    <property type="match status" value="1"/>
</dbReference>
<dbReference type="NCBIfam" id="TIGR02463">
    <property type="entry name" value="MPGP_rel"/>
    <property type="match status" value="1"/>
</dbReference>
<dbReference type="NCBIfam" id="NF002976">
    <property type="entry name" value="PRK03669.1"/>
    <property type="match status" value="1"/>
</dbReference>
<dbReference type="PANTHER" id="PTHR10000:SF8">
    <property type="entry name" value="HAD SUPERFAMILY HYDROLASE-LIKE, TYPE 3"/>
    <property type="match status" value="1"/>
</dbReference>
<dbReference type="PANTHER" id="PTHR10000">
    <property type="entry name" value="PHOSPHOSERINE PHOSPHATASE"/>
    <property type="match status" value="1"/>
</dbReference>
<dbReference type="Pfam" id="PF08282">
    <property type="entry name" value="Hydrolase_3"/>
    <property type="match status" value="1"/>
</dbReference>
<dbReference type="SFLD" id="SFLDG01142">
    <property type="entry name" value="C2.B.2:_Mannosyl-3-phosphoglyc"/>
    <property type="match status" value="1"/>
</dbReference>
<dbReference type="SFLD" id="SFLDG01140">
    <property type="entry name" value="C2.B:_Phosphomannomutase_and_P"/>
    <property type="match status" value="1"/>
</dbReference>
<dbReference type="SUPFAM" id="SSF56784">
    <property type="entry name" value="HAD-like"/>
    <property type="match status" value="1"/>
</dbReference>
<reference key="1">
    <citation type="journal article" date="2005" name="Nucleic Acids Res.">
        <title>The genome sequence of Salmonella enterica serovar Choleraesuis, a highly invasive and resistant zoonotic pathogen.</title>
        <authorList>
            <person name="Chiu C.-H."/>
            <person name="Tang P."/>
            <person name="Chu C."/>
            <person name="Hu S."/>
            <person name="Bao Q."/>
            <person name="Yu J."/>
            <person name="Chou Y.-Y."/>
            <person name="Wang H.-S."/>
            <person name="Lee Y.-S."/>
        </authorList>
    </citation>
    <scope>NUCLEOTIDE SEQUENCE [LARGE SCALE GENOMIC DNA]</scope>
    <source>
        <strain>SC-B67</strain>
    </source>
</reference>
<organism>
    <name type="scientific">Salmonella choleraesuis (strain SC-B67)</name>
    <dbReference type="NCBI Taxonomy" id="321314"/>
    <lineage>
        <taxon>Bacteria</taxon>
        <taxon>Pseudomonadati</taxon>
        <taxon>Pseudomonadota</taxon>
        <taxon>Gammaproteobacteria</taxon>
        <taxon>Enterobacterales</taxon>
        <taxon>Enterobacteriaceae</taxon>
        <taxon>Salmonella</taxon>
    </lineage>
</organism>
<comment type="catalytic activity">
    <reaction evidence="1">
        <text>2-O-(alpha-D-mannosyl)-3-phosphoglycerate + H2O = (2R)-2-O-(alpha-D-mannosyl)-glycerate + phosphate</text>
        <dbReference type="Rhea" id="RHEA:19309"/>
        <dbReference type="ChEBI" id="CHEBI:15377"/>
        <dbReference type="ChEBI" id="CHEBI:43474"/>
        <dbReference type="ChEBI" id="CHEBI:57541"/>
        <dbReference type="ChEBI" id="CHEBI:57744"/>
        <dbReference type="EC" id="3.1.3.70"/>
    </reaction>
</comment>
<comment type="cofactor">
    <cofactor evidence="1">
        <name>Mg(2+)</name>
        <dbReference type="ChEBI" id="CHEBI:18420"/>
    </cofactor>
</comment>
<comment type="subcellular location">
    <subcellularLocation>
        <location evidence="1">Cytoplasm</location>
    </subcellularLocation>
</comment>
<comment type="similarity">
    <text evidence="1">Belongs to the HAD-like hydrolase superfamily. MPGP family.</text>
</comment>